<evidence type="ECO:0000303" key="1">
    <source>
    </source>
</evidence>
<evidence type="ECO:0000305" key="2"/>
<sequence length="1181" mass="138439">MVVMAQTKLCSDIEIPKEVYNKWKDFIKLVGNIILSIKQIPELEGKFKELLKKGRYNFKSDDFGGQLPEPFTRQKVIEPILEFLGYEFTSEISKKSPLGDRKIPDYRVSVFNKEILIEAEPLGSDLNKKDSGIHQVKEWLIIKSYGVDTGIATNGLEWVLLHYDDTIKEIRTLKELNLKSIFEYVLENKKDKDLENELKQVFSEFYYCFSKEYIEEYIEVATKNIKHKKEEITNEFYKEFVKLVFGFEDVKDVKKKDKSSSEKDKGTKKCLYNCIEAPPNTSELDKKKFAVLLMNRLIFIKFLEDKGIVPRDLLRRTYEDYKKSNVLINYYDAYLKPLFYEVLNTPEDERKENIRTNPYYKDIPYLNGGLFRSNNVPNELSFTIKDNEIIGEVINFLERYKFTLSTSEGSEEVELNPDILGYVYEKLINILAEKGQKGLGAYYTPDEITSYIAKNTIEPIVVERFKEIIKNWKINDINFSTLDEILNEDSKIAENKHILRAFLDELDKIRILDPAVGSGHFLISALKELLQIKKRIYYLLREEMDIYKEKLGIILNNLYGVDIDDIAVEIAKLRLWLALIENLDVEALKRGEVLLPNIEYNVRCGNSLVGWIDENLKQLSISYLCDNVRIMCVLEGLIINAHNSEERKKLKKAKELLEKRDGYVLDNYVEAYHLLYEVYRTSHGLKANLLKELLDEIRDSIYESVTPAYFAEIYQNGNNKKNNGKKSKKNRPRVEEFEKLKPFHWKIDFGWIIKEEGFDVIIGNPPYGNLLSPTEKEIMKRRDTPEFDIFVTFIVHSSKLLKNEGYLGFIIPSSFGTGVRYSNLRKELFTKMCLKKLIYLPFDVFSGAYVDNCIIILHKKPPKSEDLVLIYAFPKKTKKISFEFKNDLFIEYSKILNDPKCRIFPKSPEIYIILDKIKQNCRESLTYLEDLTESTIGILASKYKFSDKKENEYYLPYLEGNVYRYETKLKLKNYVDFSKHKNNEKLINLFMSPEKIFIRRIVNRQDRIMASYGNIEGVVKKDLYVFVLKPDTPINYFYLLGILNSELISYIYIGKSAIALKDDFRQTTLEELRELPIVIPKNKNIINALTQLSKLRFELNDKLNENDRIFLENIIDSLVYGIYFQDLIPKEELNEICNEINGIIKKYDEKSIDCLKYCQNIIKLLNTINTNELVRKIRNKN</sequence>
<proteinExistence type="inferred from homology"/>
<comment type="function">
    <text evidence="1">Probably a G subtype restriction enzyme that recognizes an undetermined sequence and cleaves at an undetermined site. Probably also acts as an alpha subtype methylase, presumably on the same sequence.</text>
</comment>
<comment type="catalytic activity">
    <reaction>
        <text>Endonucleolytic cleavage of DNA to give specific double-stranded fragments with terminal 5'-phosphates.</text>
        <dbReference type="EC" id="3.1.21.4"/>
    </reaction>
</comment>
<comment type="catalytic activity">
    <reaction>
        <text>a 2'-deoxyadenosine in DNA + S-adenosyl-L-methionine = an N(6)-methyl-2'-deoxyadenosine in DNA + S-adenosyl-L-homocysteine + H(+)</text>
        <dbReference type="Rhea" id="RHEA:15197"/>
        <dbReference type="Rhea" id="RHEA-COMP:12418"/>
        <dbReference type="Rhea" id="RHEA-COMP:12419"/>
        <dbReference type="ChEBI" id="CHEBI:15378"/>
        <dbReference type="ChEBI" id="CHEBI:57856"/>
        <dbReference type="ChEBI" id="CHEBI:59789"/>
        <dbReference type="ChEBI" id="CHEBI:90615"/>
        <dbReference type="ChEBI" id="CHEBI:90616"/>
        <dbReference type="EC" id="2.1.1.72"/>
    </reaction>
</comment>
<comment type="similarity">
    <text evidence="2">In the C-terminal section; belongs to the N(4)/N(6)-methyltransferase family.</text>
</comment>
<protein>
    <recommendedName>
        <fullName evidence="1">Putative type II restriction enzyme and methyltransferase RM.MjaORFECS2P</fullName>
        <shortName evidence="1">RM.MjaORFECS2P</shortName>
        <ecNumber>3.1.21.4</ecNumber>
    </recommendedName>
    <domain>
        <recommendedName>
            <fullName>Adenine-specific methyltransferase activity</fullName>
            <ecNumber>2.1.1.72</ecNumber>
        </recommendedName>
    </domain>
</protein>
<reference key="1">
    <citation type="journal article" date="1996" name="Science">
        <title>Complete genome sequence of the methanogenic archaeon, Methanococcus jannaschii.</title>
        <authorList>
            <person name="Bult C.J."/>
            <person name="White O."/>
            <person name="Olsen G.J."/>
            <person name="Zhou L."/>
            <person name="Fleischmann R.D."/>
            <person name="Sutton G.G."/>
            <person name="Blake J.A."/>
            <person name="FitzGerald L.M."/>
            <person name="Clayton R.A."/>
            <person name="Gocayne J.D."/>
            <person name="Kerlavage A.R."/>
            <person name="Dougherty B.A."/>
            <person name="Tomb J.-F."/>
            <person name="Adams M.D."/>
            <person name="Reich C.I."/>
            <person name="Overbeek R."/>
            <person name="Kirkness E.F."/>
            <person name="Weinstock K.G."/>
            <person name="Merrick J.M."/>
            <person name="Glodek A."/>
            <person name="Scott J.L."/>
            <person name="Geoghagen N.S.M."/>
            <person name="Weidman J.F."/>
            <person name="Fuhrmann J.L."/>
            <person name="Nguyen D."/>
            <person name="Utterback T.R."/>
            <person name="Kelley J.M."/>
            <person name="Peterson J.D."/>
            <person name="Sadow P.W."/>
            <person name="Hanna M.C."/>
            <person name="Cotton M.D."/>
            <person name="Roberts K.M."/>
            <person name="Hurst M.A."/>
            <person name="Kaine B.P."/>
            <person name="Borodovsky M."/>
            <person name="Klenk H.-P."/>
            <person name="Fraser C.M."/>
            <person name="Smith H.O."/>
            <person name="Woese C.R."/>
            <person name="Venter J.C."/>
        </authorList>
    </citation>
    <scope>NUCLEOTIDE SEQUENCE [LARGE SCALE GENOMIC DNA]</scope>
    <source>
        <strain>ATCC 43067 / DSM 2661 / JAL-1 / JCM 10045 / NBRC 100440</strain>
    </source>
</reference>
<reference key="2">
    <citation type="journal article" date="2003" name="Nucleic Acids Res.">
        <title>A nomenclature for restriction enzymes, DNA methyltransferases, homing endonucleases and their genes.</title>
        <authorList>
            <person name="Roberts R.J."/>
            <person name="Belfort M."/>
            <person name="Bestor T."/>
            <person name="Bhagwat A.S."/>
            <person name="Bickle T.A."/>
            <person name="Bitinaite J."/>
            <person name="Blumenthal R.M."/>
            <person name="Degtyarev S.K."/>
            <person name="Dryden D.T."/>
            <person name="Dybvig K."/>
            <person name="Firman K."/>
            <person name="Gromova E.S."/>
            <person name="Gumport R.I."/>
            <person name="Halford S.E."/>
            <person name="Hattman S."/>
            <person name="Heitman J."/>
            <person name="Hornby D.P."/>
            <person name="Janulaitis A."/>
            <person name="Jeltsch A."/>
            <person name="Josephsen J."/>
            <person name="Kiss A."/>
            <person name="Klaenhammer T.R."/>
            <person name="Kobayashi I."/>
            <person name="Kong H."/>
            <person name="Krueger D.H."/>
            <person name="Lacks S."/>
            <person name="Marinus M.G."/>
            <person name="Miyahara M."/>
            <person name="Morgan R.D."/>
            <person name="Murray N.E."/>
            <person name="Nagaraja V."/>
            <person name="Piekarowicz A."/>
            <person name="Pingoud A."/>
            <person name="Raleigh E."/>
            <person name="Rao D.N."/>
            <person name="Reich N."/>
            <person name="Repin V.E."/>
            <person name="Selker E.U."/>
            <person name="Shaw P.C."/>
            <person name="Stein D.C."/>
            <person name="Stoddard B.L."/>
            <person name="Szybalski W."/>
            <person name="Trautner T.A."/>
            <person name="Van Etten J.L."/>
            <person name="Vitor J.M."/>
            <person name="Wilson G.G."/>
            <person name="Xu S.Y."/>
        </authorList>
    </citation>
    <scope>NOMENCLATURE</scope>
    <scope>SUBTYPES</scope>
</reference>
<geneLocation type="plasmid">
    <name>small ECE</name>
</geneLocation>
<organism>
    <name type="scientific">Methanocaldococcus jannaschii (strain ATCC 43067 / DSM 2661 / JAL-1 / JCM 10045 / NBRC 100440)</name>
    <name type="common">Methanococcus jannaschii</name>
    <dbReference type="NCBI Taxonomy" id="243232"/>
    <lineage>
        <taxon>Archaea</taxon>
        <taxon>Methanobacteriati</taxon>
        <taxon>Methanobacteriota</taxon>
        <taxon>Methanomada group</taxon>
        <taxon>Methanococci</taxon>
        <taxon>Methanococcales</taxon>
        <taxon>Methanocaldococcaceae</taxon>
        <taxon>Methanocaldococcus</taxon>
    </lineage>
</organism>
<keyword id="KW-0238">DNA-binding</keyword>
<keyword id="KW-0255">Endonuclease</keyword>
<keyword id="KW-0378">Hydrolase</keyword>
<keyword id="KW-0489">Methyltransferase</keyword>
<keyword id="KW-0511">Multifunctional enzyme</keyword>
<keyword id="KW-0540">Nuclease</keyword>
<keyword id="KW-0614">Plasmid</keyword>
<keyword id="KW-1185">Reference proteome</keyword>
<keyword id="KW-0680">Restriction system</keyword>
<keyword id="KW-0949">S-adenosyl-L-methionine</keyword>
<keyword id="KW-0808">Transferase</keyword>
<gene>
    <name type="ordered locus">MJECS02</name>
</gene>
<accession>Q60301</accession>
<dbReference type="EC" id="3.1.21.4"/>
<dbReference type="EC" id="2.1.1.72"/>
<dbReference type="EMBL" id="L77119">
    <property type="protein sequence ID" value="AAC37060.1"/>
    <property type="molecule type" value="Genomic_DNA"/>
</dbReference>
<dbReference type="PIR" id="B64516">
    <property type="entry name" value="B64516"/>
</dbReference>
<dbReference type="REBASE" id="6813">
    <property type="entry name" value="MjaORFECS2P"/>
</dbReference>
<dbReference type="PaxDb" id="243232-MJ_ECS02"/>
<dbReference type="DNASU" id="1450829"/>
<dbReference type="EnsemblBacteria" id="AAC37060">
    <property type="protein sequence ID" value="AAC37060"/>
    <property type="gene ID" value="MJ_ECS02"/>
</dbReference>
<dbReference type="KEGG" id="mja:MJ_ECS02"/>
<dbReference type="eggNOG" id="arCOG02635">
    <property type="taxonomic scope" value="Archaea"/>
</dbReference>
<dbReference type="HOGENOM" id="CLU_270917_0_0_2"/>
<dbReference type="InParanoid" id="Q60301"/>
<dbReference type="OrthoDB" id="66142at2157"/>
<dbReference type="Proteomes" id="UP000000805">
    <property type="component" value="Plasmid pDSM2661_2"/>
</dbReference>
<dbReference type="GO" id="GO:0003677">
    <property type="term" value="F:DNA binding"/>
    <property type="evidence" value="ECO:0007669"/>
    <property type="project" value="UniProtKB-KW"/>
</dbReference>
<dbReference type="GO" id="GO:0004519">
    <property type="term" value="F:endonuclease activity"/>
    <property type="evidence" value="ECO:0007669"/>
    <property type="project" value="UniProtKB-KW"/>
</dbReference>
<dbReference type="GO" id="GO:0008170">
    <property type="term" value="F:N-methyltransferase activity"/>
    <property type="evidence" value="ECO:0007669"/>
    <property type="project" value="InterPro"/>
</dbReference>
<dbReference type="GO" id="GO:0009007">
    <property type="term" value="F:site-specific DNA-methyltransferase (adenine-specific) activity"/>
    <property type="evidence" value="ECO:0007669"/>
    <property type="project" value="UniProtKB-EC"/>
</dbReference>
<dbReference type="GO" id="GO:0009307">
    <property type="term" value="P:DNA restriction-modification system"/>
    <property type="evidence" value="ECO:0007669"/>
    <property type="project" value="UniProtKB-KW"/>
</dbReference>
<dbReference type="GO" id="GO:0032259">
    <property type="term" value="P:methylation"/>
    <property type="evidence" value="ECO:0007669"/>
    <property type="project" value="UniProtKB-KW"/>
</dbReference>
<dbReference type="Gene3D" id="3.40.50.150">
    <property type="entry name" value="Vaccinia Virus protein VP39"/>
    <property type="match status" value="1"/>
</dbReference>
<dbReference type="InterPro" id="IPR003356">
    <property type="entry name" value="DNA_methylase_A-5"/>
</dbReference>
<dbReference type="InterPro" id="IPR002052">
    <property type="entry name" value="DNA_methylase_N6_adenine_CS"/>
</dbReference>
<dbReference type="InterPro" id="IPR011639">
    <property type="entry name" value="MethylTrfase_TaqI-like_dom"/>
</dbReference>
<dbReference type="InterPro" id="IPR046819">
    <property type="entry name" value="MmeI_hel"/>
</dbReference>
<dbReference type="InterPro" id="IPR050953">
    <property type="entry name" value="N4_N6_ade-DNA_methylase"/>
</dbReference>
<dbReference type="InterPro" id="IPR029063">
    <property type="entry name" value="SAM-dependent_MTases_sf"/>
</dbReference>
<dbReference type="InterPro" id="IPR025931">
    <property type="entry name" value="TaqI_C"/>
</dbReference>
<dbReference type="PANTHER" id="PTHR33841:SF1">
    <property type="entry name" value="DNA METHYLTRANSFERASE A"/>
    <property type="match status" value="1"/>
</dbReference>
<dbReference type="PANTHER" id="PTHR33841">
    <property type="entry name" value="DNA METHYLTRANSFERASE YEEA-RELATED"/>
    <property type="match status" value="1"/>
</dbReference>
<dbReference type="Pfam" id="PF07669">
    <property type="entry name" value="Eco57I"/>
    <property type="match status" value="1"/>
</dbReference>
<dbReference type="Pfam" id="PF20465">
    <property type="entry name" value="MmeI_hel"/>
    <property type="match status" value="1"/>
</dbReference>
<dbReference type="Pfam" id="PF02384">
    <property type="entry name" value="N6_Mtase"/>
    <property type="match status" value="1"/>
</dbReference>
<dbReference type="Pfam" id="PF12950">
    <property type="entry name" value="TaqI_C"/>
    <property type="match status" value="1"/>
</dbReference>
<dbReference type="PRINTS" id="PR00507">
    <property type="entry name" value="N12N6MTFRASE"/>
</dbReference>
<dbReference type="SUPFAM" id="SSF53335">
    <property type="entry name" value="S-adenosyl-L-methionine-dependent methyltransferases"/>
    <property type="match status" value="1"/>
</dbReference>
<dbReference type="PROSITE" id="PS00092">
    <property type="entry name" value="N6_MTASE"/>
    <property type="match status" value="1"/>
</dbReference>
<name>T2RM_METJA</name>
<feature type="chain" id="PRO_0000088002" description="Putative type II restriction enzyme and methyltransferase RM.MjaORFECS2P">
    <location>
        <begin position="1"/>
        <end position="1181"/>
    </location>
</feature>